<organism>
    <name type="scientific">Xenopus tropicalis</name>
    <name type="common">Western clawed frog</name>
    <name type="synonym">Silurana tropicalis</name>
    <dbReference type="NCBI Taxonomy" id="8364"/>
    <lineage>
        <taxon>Eukaryota</taxon>
        <taxon>Metazoa</taxon>
        <taxon>Chordata</taxon>
        <taxon>Craniata</taxon>
        <taxon>Vertebrata</taxon>
        <taxon>Euteleostomi</taxon>
        <taxon>Amphibia</taxon>
        <taxon>Batrachia</taxon>
        <taxon>Anura</taxon>
        <taxon>Pipoidea</taxon>
        <taxon>Pipidae</taxon>
        <taxon>Xenopodinae</taxon>
        <taxon>Xenopus</taxon>
        <taxon>Silurana</taxon>
    </lineage>
</organism>
<reference key="1">
    <citation type="submission" date="2006-10" db="EMBL/GenBank/DDBJ databases">
        <authorList>
            <consortium name="Sanger Xenopus tropicalis EST/cDNA project"/>
        </authorList>
    </citation>
    <scope>NUCLEOTIDE SEQUENCE [LARGE SCALE MRNA]</scope>
    <source>
        <tissue>Gastrula</tissue>
    </source>
</reference>
<name>NB5R4_XENTR</name>
<gene>
    <name type="primary">cyb5r4</name>
    <name type="ORF">TGas070l21.1</name>
</gene>
<protein>
    <recommendedName>
        <fullName>Cytochrome b5 reductase 4</fullName>
        <ecNumber>1.6.2.2</ecNumber>
    </recommendedName>
    <alternativeName>
        <fullName>Flavohemoprotein b5/b5R</fullName>
        <shortName>b5+b5R</shortName>
    </alternativeName>
    <alternativeName>
        <fullName>cb5/cb5R</fullName>
    </alternativeName>
</protein>
<keyword id="KW-0256">Endoplasmic reticulum</keyword>
<keyword id="KW-0274">FAD</keyword>
<keyword id="KW-0285">Flavoprotein</keyword>
<keyword id="KW-0349">Heme</keyword>
<keyword id="KW-0408">Iron</keyword>
<keyword id="KW-0479">Metal-binding</keyword>
<keyword id="KW-0520">NAD</keyword>
<keyword id="KW-0560">Oxidoreductase</keyword>
<keyword id="KW-1185">Reference proteome</keyword>
<evidence type="ECO:0000250" key="1"/>
<evidence type="ECO:0000255" key="2">
    <source>
        <dbReference type="PROSITE-ProRule" id="PRU00279"/>
    </source>
</evidence>
<evidence type="ECO:0000255" key="3">
    <source>
        <dbReference type="PROSITE-ProRule" id="PRU00547"/>
    </source>
</evidence>
<evidence type="ECO:0000255" key="4">
    <source>
        <dbReference type="PROSITE-ProRule" id="PRU00716"/>
    </source>
</evidence>
<evidence type="ECO:0000305" key="5"/>
<accession>Q28CZ9</accession>
<proteinExistence type="evidence at transcript level"/>
<dbReference type="EC" id="1.6.2.2"/>
<dbReference type="EMBL" id="CR855785">
    <property type="protein sequence ID" value="CAJ83762.1"/>
    <property type="molecule type" value="mRNA"/>
</dbReference>
<dbReference type="RefSeq" id="NP_001016756.1">
    <property type="nucleotide sequence ID" value="NM_001016756.2"/>
</dbReference>
<dbReference type="RefSeq" id="XP_031757575.1">
    <property type="nucleotide sequence ID" value="XM_031901715.1"/>
</dbReference>
<dbReference type="SMR" id="Q28CZ9"/>
<dbReference type="FunCoup" id="Q28CZ9">
    <property type="interactions" value="2340"/>
</dbReference>
<dbReference type="STRING" id="8364.ENSXETP00000006724"/>
<dbReference type="PaxDb" id="8364-ENSXETP00000048892"/>
<dbReference type="GeneID" id="549510"/>
<dbReference type="KEGG" id="xtr:549510"/>
<dbReference type="AGR" id="Xenbase:XB-GENE-984179"/>
<dbReference type="CTD" id="51167"/>
<dbReference type="Xenbase" id="XB-GENE-984179">
    <property type="gene designation" value="cyb5r4"/>
</dbReference>
<dbReference type="eggNOG" id="KOG0534">
    <property type="taxonomic scope" value="Eukaryota"/>
</dbReference>
<dbReference type="eggNOG" id="KOG0536">
    <property type="taxonomic scope" value="Eukaryota"/>
</dbReference>
<dbReference type="HOGENOM" id="CLU_003827_0_2_1"/>
<dbReference type="InParanoid" id="Q28CZ9"/>
<dbReference type="OMA" id="ERFSCTN"/>
<dbReference type="OrthoDB" id="432299at2759"/>
<dbReference type="PhylomeDB" id="Q28CZ9"/>
<dbReference type="Reactome" id="R-XTR-1237044">
    <property type="pathway name" value="Erythrocytes take up carbon dioxide and release oxygen"/>
</dbReference>
<dbReference type="Proteomes" id="UP000008143">
    <property type="component" value="Chromosome 5"/>
</dbReference>
<dbReference type="GO" id="GO:0005783">
    <property type="term" value="C:endoplasmic reticulum"/>
    <property type="evidence" value="ECO:0007669"/>
    <property type="project" value="UniProtKB-SubCell"/>
</dbReference>
<dbReference type="GO" id="GO:0004128">
    <property type="term" value="F:cytochrome-b5 reductase activity, acting on NAD(P)H"/>
    <property type="evidence" value="ECO:0007669"/>
    <property type="project" value="UniProtKB-EC"/>
</dbReference>
<dbReference type="GO" id="GO:0020037">
    <property type="term" value="F:heme binding"/>
    <property type="evidence" value="ECO:0007669"/>
    <property type="project" value="InterPro"/>
</dbReference>
<dbReference type="GO" id="GO:0046872">
    <property type="term" value="F:metal ion binding"/>
    <property type="evidence" value="ECO:0007669"/>
    <property type="project" value="UniProtKB-KW"/>
</dbReference>
<dbReference type="CDD" id="cd06183">
    <property type="entry name" value="cyt_b5_reduct_like"/>
    <property type="match status" value="1"/>
</dbReference>
<dbReference type="CDD" id="cd06490">
    <property type="entry name" value="p23_NCB5OR"/>
    <property type="match status" value="1"/>
</dbReference>
<dbReference type="FunFam" id="2.40.30.10:FF:000063">
    <property type="entry name" value="Cytochrome b5 reductase 4"/>
    <property type="match status" value="1"/>
</dbReference>
<dbReference type="FunFam" id="3.10.120.10:FF:000001">
    <property type="entry name" value="Cytochrome b5 reductase 4"/>
    <property type="match status" value="1"/>
</dbReference>
<dbReference type="FunFam" id="3.40.50.80:FF:000021">
    <property type="entry name" value="Cytochrome b5 reductase 4"/>
    <property type="match status" value="1"/>
</dbReference>
<dbReference type="FunFam" id="2.60.40.790:FF:000019">
    <property type="entry name" value="cytochrome b5 reductase 4 isoform X1"/>
    <property type="match status" value="1"/>
</dbReference>
<dbReference type="Gene3D" id="2.60.40.790">
    <property type="match status" value="1"/>
</dbReference>
<dbReference type="Gene3D" id="3.10.120.10">
    <property type="entry name" value="Cytochrome b5-like heme/steroid binding domain"/>
    <property type="match status" value="1"/>
</dbReference>
<dbReference type="Gene3D" id="3.40.50.80">
    <property type="entry name" value="Nucleotide-binding domain of ferredoxin-NADP reductase (FNR) module"/>
    <property type="match status" value="1"/>
</dbReference>
<dbReference type="Gene3D" id="2.40.30.10">
    <property type="entry name" value="Translation factors"/>
    <property type="match status" value="1"/>
</dbReference>
<dbReference type="InterPro" id="IPR008333">
    <property type="entry name" value="Cbr1-like_FAD-bd_dom"/>
</dbReference>
<dbReference type="InterPro" id="IPR007052">
    <property type="entry name" value="CS_dom"/>
</dbReference>
<dbReference type="InterPro" id="IPR001199">
    <property type="entry name" value="Cyt_B5-like_heme/steroid-bd"/>
</dbReference>
<dbReference type="InterPro" id="IPR036400">
    <property type="entry name" value="Cyt_B5-like_heme/steroid_sf"/>
</dbReference>
<dbReference type="InterPro" id="IPR018506">
    <property type="entry name" value="Cyt_B5_heme-BS"/>
</dbReference>
<dbReference type="InterPro" id="IPR051872">
    <property type="entry name" value="Cytochrome_b5/Flavoprotein_Rdt"/>
</dbReference>
<dbReference type="InterPro" id="IPR017927">
    <property type="entry name" value="FAD-bd_FR_type"/>
</dbReference>
<dbReference type="InterPro" id="IPR039261">
    <property type="entry name" value="FNR_nucleotide-bd"/>
</dbReference>
<dbReference type="InterPro" id="IPR008978">
    <property type="entry name" value="HSP20-like_chaperone"/>
</dbReference>
<dbReference type="InterPro" id="IPR001433">
    <property type="entry name" value="OxRdtase_FAD/NAD-bd"/>
</dbReference>
<dbReference type="InterPro" id="IPR037908">
    <property type="entry name" value="p23_NCB5OR"/>
</dbReference>
<dbReference type="InterPro" id="IPR017938">
    <property type="entry name" value="Riboflavin_synthase-like_b-brl"/>
</dbReference>
<dbReference type="PANTHER" id="PTHR46237:SF1">
    <property type="entry name" value="CYTOCHROME B5 REDUCTASE 4"/>
    <property type="match status" value="1"/>
</dbReference>
<dbReference type="PANTHER" id="PTHR46237">
    <property type="entry name" value="CYTOCHROME B5 REDUCTASE 4 FAMILY MEMBER"/>
    <property type="match status" value="1"/>
</dbReference>
<dbReference type="Pfam" id="PF04969">
    <property type="entry name" value="CS"/>
    <property type="match status" value="1"/>
</dbReference>
<dbReference type="Pfam" id="PF00173">
    <property type="entry name" value="Cyt-b5"/>
    <property type="match status" value="1"/>
</dbReference>
<dbReference type="Pfam" id="PF00970">
    <property type="entry name" value="FAD_binding_6"/>
    <property type="match status" value="1"/>
</dbReference>
<dbReference type="Pfam" id="PF00175">
    <property type="entry name" value="NAD_binding_1"/>
    <property type="match status" value="1"/>
</dbReference>
<dbReference type="PRINTS" id="PR00406">
    <property type="entry name" value="CYTB5RDTASE"/>
</dbReference>
<dbReference type="PRINTS" id="PR00363">
    <property type="entry name" value="CYTOCHROMEB5"/>
</dbReference>
<dbReference type="SMART" id="SM01117">
    <property type="entry name" value="Cyt-b5"/>
    <property type="match status" value="1"/>
</dbReference>
<dbReference type="SUPFAM" id="SSF55856">
    <property type="entry name" value="Cytochrome b5-like heme/steroid binding domain"/>
    <property type="match status" value="1"/>
</dbReference>
<dbReference type="SUPFAM" id="SSF52343">
    <property type="entry name" value="Ferredoxin reductase-like, C-terminal NADP-linked domain"/>
    <property type="match status" value="1"/>
</dbReference>
<dbReference type="SUPFAM" id="SSF49764">
    <property type="entry name" value="HSP20-like chaperones"/>
    <property type="match status" value="1"/>
</dbReference>
<dbReference type="SUPFAM" id="SSF63380">
    <property type="entry name" value="Riboflavin synthase domain-like"/>
    <property type="match status" value="1"/>
</dbReference>
<dbReference type="PROSITE" id="PS51203">
    <property type="entry name" value="CS"/>
    <property type="match status" value="1"/>
</dbReference>
<dbReference type="PROSITE" id="PS00191">
    <property type="entry name" value="CYTOCHROME_B5_1"/>
    <property type="match status" value="1"/>
</dbReference>
<dbReference type="PROSITE" id="PS50255">
    <property type="entry name" value="CYTOCHROME_B5_2"/>
    <property type="match status" value="1"/>
</dbReference>
<dbReference type="PROSITE" id="PS51384">
    <property type="entry name" value="FAD_FR"/>
    <property type="match status" value="1"/>
</dbReference>
<comment type="function">
    <text evidence="1">NADH-cytochrome b5 reductase involved in endoplasmic reticulum stress response pathway.</text>
</comment>
<comment type="catalytic activity">
    <reaction>
        <text>2 Fe(III)-[cytochrome b5] + NADH = 2 Fe(II)-[cytochrome b5] + NAD(+) + H(+)</text>
        <dbReference type="Rhea" id="RHEA:46680"/>
        <dbReference type="Rhea" id="RHEA-COMP:10438"/>
        <dbReference type="Rhea" id="RHEA-COMP:10439"/>
        <dbReference type="ChEBI" id="CHEBI:15378"/>
        <dbReference type="ChEBI" id="CHEBI:29033"/>
        <dbReference type="ChEBI" id="CHEBI:29034"/>
        <dbReference type="ChEBI" id="CHEBI:57540"/>
        <dbReference type="ChEBI" id="CHEBI:57945"/>
        <dbReference type="EC" id="1.6.2.2"/>
    </reaction>
</comment>
<comment type="cofactor">
    <cofactor evidence="1">
        <name>FAD</name>
        <dbReference type="ChEBI" id="CHEBI:57692"/>
    </cofactor>
</comment>
<comment type="subcellular location">
    <subcellularLocation>
        <location>Endoplasmic reticulum</location>
    </subcellularLocation>
    <text evidence="1">Soluble protein.</text>
</comment>
<comment type="similarity">
    <text evidence="5">Belongs to the flavoprotein pyridine nucleotide cytochrome reductase family.</text>
</comment>
<sequence length="523" mass="59216">MLNVPSQSFPAPSSQQRVAAIGRSKVPLKPGRSLMDWIRLTKSGKDLTGLKGRLIDVTEEELAQHNKKEDCWICIRGMVYNITPYMEYHPGGEEELMKAAGRDGTDLFDQVHRWVNYESMLKECLIGRMAIKHVSISKEVTSVENKMNKHLNGSVASSKMSRTSSKESHPWYDWFQTESLVTVAVYTKMKNVCSELVIVDHLENVLRGEIIIGDYSYLLHSELSHPVQKDIEVKVSATAGKIEIKMKKKEPVSWKSLGQPMDGHNSFLKHSQRGLYYRKCRLASKTDINYNTKLFCVQLPQGCHLQVPVGHHIYLKMNISGVDIVKPYTPVASCLLPDAQYSTFCNKQCLYLMIKIYPNGSITPHLENLTVGDYISISNPQGTFSSFQIENVMDVFLVAAGTGITPMIRLLQHVLTCVSSLRKAKLIFFNKKEEDILWKEQVEELSLADKRFEAQLILSEPSVKWTGYRGQISYSLLNESILRTEEGSKILICICGPNAFVDQGISFLQDLGFSKEEVFAFRE</sequence>
<feature type="chain" id="PRO_0000287560" description="Cytochrome b5 reductase 4">
    <location>
        <begin position="1"/>
        <end position="523"/>
    </location>
</feature>
<feature type="domain" description="Cytochrome b5 heme-binding" evidence="2">
    <location>
        <begin position="54"/>
        <end position="130"/>
    </location>
</feature>
<feature type="domain" description="CS" evidence="3">
    <location>
        <begin position="167"/>
        <end position="258"/>
    </location>
</feature>
<feature type="domain" description="FAD-binding FR-type" evidence="4">
    <location>
        <begin position="275"/>
        <end position="387"/>
    </location>
</feature>
<feature type="binding site" description="axial binding residue" evidence="2">
    <location>
        <position position="89"/>
    </location>
    <ligand>
        <name>heme</name>
        <dbReference type="ChEBI" id="CHEBI:30413"/>
    </ligand>
    <ligandPart>
        <name>Fe</name>
        <dbReference type="ChEBI" id="CHEBI:18248"/>
    </ligandPart>
</feature>
<feature type="binding site" description="axial binding residue" evidence="2">
    <location>
        <position position="112"/>
    </location>
    <ligand>
        <name>heme</name>
        <dbReference type="ChEBI" id="CHEBI:30413"/>
    </ligand>
    <ligandPart>
        <name>Fe</name>
        <dbReference type="ChEBI" id="CHEBI:18248"/>
    </ligandPart>
</feature>
<feature type="binding site" evidence="1">
    <location>
        <begin position="367"/>
        <end position="382"/>
    </location>
    <ligand>
        <name>FAD</name>
        <dbReference type="ChEBI" id="CHEBI:57692"/>
    </ligand>
</feature>
<feature type="binding site" evidence="1">
    <location>
        <begin position="394"/>
        <end position="426"/>
    </location>
    <ligand>
        <name>FAD</name>
        <dbReference type="ChEBI" id="CHEBI:57692"/>
    </ligand>
</feature>